<accession>B0RU84</accession>
<dbReference type="EC" id="3.6.5.3" evidence="2"/>
<dbReference type="EMBL" id="AM920689">
    <property type="protein sequence ID" value="CAP52826.1"/>
    <property type="molecule type" value="Genomic_DNA"/>
</dbReference>
<dbReference type="SMR" id="B0RU84"/>
<dbReference type="KEGG" id="xca:xcc-b100_3461"/>
<dbReference type="HOGENOM" id="CLU_007265_0_0_6"/>
<dbReference type="Proteomes" id="UP000001188">
    <property type="component" value="Chromosome"/>
</dbReference>
<dbReference type="GO" id="GO:0005829">
    <property type="term" value="C:cytosol"/>
    <property type="evidence" value="ECO:0007669"/>
    <property type="project" value="TreeGrafter"/>
</dbReference>
<dbReference type="GO" id="GO:0005525">
    <property type="term" value="F:GTP binding"/>
    <property type="evidence" value="ECO:0007669"/>
    <property type="project" value="UniProtKB-UniRule"/>
</dbReference>
<dbReference type="GO" id="GO:0003924">
    <property type="term" value="F:GTPase activity"/>
    <property type="evidence" value="ECO:0007669"/>
    <property type="project" value="InterPro"/>
</dbReference>
<dbReference type="GO" id="GO:0097216">
    <property type="term" value="F:guanosine tetraphosphate binding"/>
    <property type="evidence" value="ECO:0007669"/>
    <property type="project" value="UniProtKB-ARBA"/>
</dbReference>
<dbReference type="GO" id="GO:0003746">
    <property type="term" value="F:translation elongation factor activity"/>
    <property type="evidence" value="ECO:0007669"/>
    <property type="project" value="UniProtKB-UniRule"/>
</dbReference>
<dbReference type="CDD" id="cd01884">
    <property type="entry name" value="EF_Tu"/>
    <property type="match status" value="1"/>
</dbReference>
<dbReference type="CDD" id="cd03697">
    <property type="entry name" value="EFTU_II"/>
    <property type="match status" value="1"/>
</dbReference>
<dbReference type="CDD" id="cd03707">
    <property type="entry name" value="EFTU_III"/>
    <property type="match status" value="1"/>
</dbReference>
<dbReference type="FunFam" id="2.40.30.10:FF:000001">
    <property type="entry name" value="Elongation factor Tu"/>
    <property type="match status" value="1"/>
</dbReference>
<dbReference type="FunFam" id="3.40.50.300:FF:000003">
    <property type="entry name" value="Elongation factor Tu"/>
    <property type="match status" value="1"/>
</dbReference>
<dbReference type="Gene3D" id="3.40.50.300">
    <property type="entry name" value="P-loop containing nucleotide triphosphate hydrolases"/>
    <property type="match status" value="1"/>
</dbReference>
<dbReference type="Gene3D" id="2.40.30.10">
    <property type="entry name" value="Translation factors"/>
    <property type="match status" value="2"/>
</dbReference>
<dbReference type="HAMAP" id="MF_00118_B">
    <property type="entry name" value="EF_Tu_B"/>
    <property type="match status" value="1"/>
</dbReference>
<dbReference type="InterPro" id="IPR041709">
    <property type="entry name" value="EF-Tu_GTP-bd"/>
</dbReference>
<dbReference type="InterPro" id="IPR050055">
    <property type="entry name" value="EF-Tu_GTPase"/>
</dbReference>
<dbReference type="InterPro" id="IPR004161">
    <property type="entry name" value="EFTu-like_2"/>
</dbReference>
<dbReference type="InterPro" id="IPR033720">
    <property type="entry name" value="EFTU_2"/>
</dbReference>
<dbReference type="InterPro" id="IPR031157">
    <property type="entry name" value="G_TR_CS"/>
</dbReference>
<dbReference type="InterPro" id="IPR027417">
    <property type="entry name" value="P-loop_NTPase"/>
</dbReference>
<dbReference type="InterPro" id="IPR005225">
    <property type="entry name" value="Small_GTP-bd"/>
</dbReference>
<dbReference type="InterPro" id="IPR000795">
    <property type="entry name" value="T_Tr_GTP-bd_dom"/>
</dbReference>
<dbReference type="InterPro" id="IPR009000">
    <property type="entry name" value="Transl_B-barrel_sf"/>
</dbReference>
<dbReference type="InterPro" id="IPR009001">
    <property type="entry name" value="Transl_elong_EF1A/Init_IF2_C"/>
</dbReference>
<dbReference type="InterPro" id="IPR004541">
    <property type="entry name" value="Transl_elong_EFTu/EF1A_bac/org"/>
</dbReference>
<dbReference type="InterPro" id="IPR004160">
    <property type="entry name" value="Transl_elong_EFTu/EF1A_C"/>
</dbReference>
<dbReference type="NCBIfam" id="TIGR00485">
    <property type="entry name" value="EF-Tu"/>
    <property type="match status" value="1"/>
</dbReference>
<dbReference type="NCBIfam" id="NF000766">
    <property type="entry name" value="PRK00049.1"/>
    <property type="match status" value="1"/>
</dbReference>
<dbReference type="NCBIfam" id="NF009372">
    <property type="entry name" value="PRK12735.1"/>
    <property type="match status" value="1"/>
</dbReference>
<dbReference type="NCBIfam" id="NF009373">
    <property type="entry name" value="PRK12736.1"/>
    <property type="match status" value="1"/>
</dbReference>
<dbReference type="NCBIfam" id="TIGR00231">
    <property type="entry name" value="small_GTP"/>
    <property type="match status" value="1"/>
</dbReference>
<dbReference type="PANTHER" id="PTHR43721:SF22">
    <property type="entry name" value="ELONGATION FACTOR TU, MITOCHONDRIAL"/>
    <property type="match status" value="1"/>
</dbReference>
<dbReference type="PANTHER" id="PTHR43721">
    <property type="entry name" value="ELONGATION FACTOR TU-RELATED"/>
    <property type="match status" value="1"/>
</dbReference>
<dbReference type="Pfam" id="PF00009">
    <property type="entry name" value="GTP_EFTU"/>
    <property type="match status" value="1"/>
</dbReference>
<dbReference type="Pfam" id="PF03144">
    <property type="entry name" value="GTP_EFTU_D2"/>
    <property type="match status" value="1"/>
</dbReference>
<dbReference type="Pfam" id="PF03143">
    <property type="entry name" value="GTP_EFTU_D3"/>
    <property type="match status" value="1"/>
</dbReference>
<dbReference type="PRINTS" id="PR00315">
    <property type="entry name" value="ELONGATNFCT"/>
</dbReference>
<dbReference type="SUPFAM" id="SSF50465">
    <property type="entry name" value="EF-Tu/eEF-1alpha/eIF2-gamma C-terminal domain"/>
    <property type="match status" value="1"/>
</dbReference>
<dbReference type="SUPFAM" id="SSF52540">
    <property type="entry name" value="P-loop containing nucleoside triphosphate hydrolases"/>
    <property type="match status" value="1"/>
</dbReference>
<dbReference type="SUPFAM" id="SSF50447">
    <property type="entry name" value="Translation proteins"/>
    <property type="match status" value="1"/>
</dbReference>
<dbReference type="PROSITE" id="PS00301">
    <property type="entry name" value="G_TR_1"/>
    <property type="match status" value="1"/>
</dbReference>
<dbReference type="PROSITE" id="PS51722">
    <property type="entry name" value="G_TR_2"/>
    <property type="match status" value="1"/>
</dbReference>
<sequence length="396" mass="43208">MARAKFLREKLHVNVGTIGHVDHGKTTLTAALTKIGAERFGGEFKAYDAIDAAPEEKARGITISTAHVEYESAVRHYAHVDCPGHADYVKNMITGAAQMDGAILVCSAADGPMPQTREHILLSRQVGVPHIVVFLNKADMVDDAELLELVEMEVRELLSKYDFPGDDTPIIHGSARLALEGDQSDIGVPAILKLVEALDTFIPDPTRDVDRPFLMPVEDVFSISGRGTVVTGRIERGIIRVGDEIEIVGIRDTHKTTVTGVEMFRKLLDQGQAGDNAGLLLRGTKRDDVERGQVLCKPGSIKPHTEFEAEVYVLSKDEGGRHTPFFKGYRPQFYFRTTDITGACQLPEGVEMVMPGDNVKMVVTLINPVAMDEGLRFAIREGGRTVGAGVVAKIVK</sequence>
<keyword id="KW-0963">Cytoplasm</keyword>
<keyword id="KW-0251">Elongation factor</keyword>
<keyword id="KW-0342">GTP-binding</keyword>
<keyword id="KW-0378">Hydrolase</keyword>
<keyword id="KW-0460">Magnesium</keyword>
<keyword id="KW-0479">Metal-binding</keyword>
<keyword id="KW-0547">Nucleotide-binding</keyword>
<keyword id="KW-0648">Protein biosynthesis</keyword>
<comment type="function">
    <text evidence="2">GTP hydrolase that promotes the GTP-dependent binding of aminoacyl-tRNA to the A-site of ribosomes during protein biosynthesis.</text>
</comment>
<comment type="catalytic activity">
    <reaction evidence="2">
        <text>GTP + H2O = GDP + phosphate + H(+)</text>
        <dbReference type="Rhea" id="RHEA:19669"/>
        <dbReference type="ChEBI" id="CHEBI:15377"/>
        <dbReference type="ChEBI" id="CHEBI:15378"/>
        <dbReference type="ChEBI" id="CHEBI:37565"/>
        <dbReference type="ChEBI" id="CHEBI:43474"/>
        <dbReference type="ChEBI" id="CHEBI:58189"/>
        <dbReference type="EC" id="3.6.5.3"/>
    </reaction>
    <physiologicalReaction direction="left-to-right" evidence="2">
        <dbReference type="Rhea" id="RHEA:19670"/>
    </physiologicalReaction>
</comment>
<comment type="subunit">
    <text evidence="2">Monomer.</text>
</comment>
<comment type="subcellular location">
    <subcellularLocation>
        <location evidence="2">Cytoplasm</location>
    </subcellularLocation>
</comment>
<comment type="similarity">
    <text evidence="2">Belongs to the TRAFAC class translation factor GTPase superfamily. Classic translation factor GTPase family. EF-Tu/EF-1A subfamily.</text>
</comment>
<proteinExistence type="inferred from homology"/>
<reference key="1">
    <citation type="journal article" date="2008" name="J. Biotechnol.">
        <title>The genome of Xanthomonas campestris pv. campestris B100 and its use for the reconstruction of metabolic pathways involved in xanthan biosynthesis.</title>
        <authorList>
            <person name="Vorhoelter F.-J."/>
            <person name="Schneiker S."/>
            <person name="Goesmann A."/>
            <person name="Krause L."/>
            <person name="Bekel T."/>
            <person name="Kaiser O."/>
            <person name="Linke B."/>
            <person name="Patschkowski T."/>
            <person name="Rueckert C."/>
            <person name="Schmid J."/>
            <person name="Sidhu V.K."/>
            <person name="Sieber V."/>
            <person name="Tauch A."/>
            <person name="Watt S.A."/>
            <person name="Weisshaar B."/>
            <person name="Becker A."/>
            <person name="Niehaus K."/>
            <person name="Puehler A."/>
        </authorList>
    </citation>
    <scope>NUCLEOTIDE SEQUENCE [LARGE SCALE GENOMIC DNA]</scope>
    <source>
        <strain>B100</strain>
    </source>
</reference>
<organism>
    <name type="scientific">Xanthomonas campestris pv. campestris (strain B100)</name>
    <dbReference type="NCBI Taxonomy" id="509169"/>
    <lineage>
        <taxon>Bacteria</taxon>
        <taxon>Pseudomonadati</taxon>
        <taxon>Pseudomonadota</taxon>
        <taxon>Gammaproteobacteria</taxon>
        <taxon>Lysobacterales</taxon>
        <taxon>Lysobacteraceae</taxon>
        <taxon>Xanthomonas</taxon>
    </lineage>
</organism>
<name>EFTU1_XANCB</name>
<evidence type="ECO:0000250" key="1"/>
<evidence type="ECO:0000255" key="2">
    <source>
        <dbReference type="HAMAP-Rule" id="MF_00118"/>
    </source>
</evidence>
<gene>
    <name evidence="2" type="primary">tuf1</name>
    <name type="synonym">tufA</name>
    <name type="ordered locus">xcc-b100_3461</name>
</gene>
<protein>
    <recommendedName>
        <fullName evidence="2">Elongation factor Tu 1</fullName>
        <shortName evidence="2">EF-Tu 1</shortName>
        <ecNumber evidence="2">3.6.5.3</ecNumber>
    </recommendedName>
</protein>
<feature type="chain" id="PRO_0000337577" description="Elongation factor Tu 1">
    <location>
        <begin position="1"/>
        <end position="396"/>
    </location>
</feature>
<feature type="domain" description="tr-type G">
    <location>
        <begin position="10"/>
        <end position="206"/>
    </location>
</feature>
<feature type="region of interest" description="G1" evidence="1">
    <location>
        <begin position="19"/>
        <end position="26"/>
    </location>
</feature>
<feature type="region of interest" description="G2" evidence="1">
    <location>
        <begin position="60"/>
        <end position="64"/>
    </location>
</feature>
<feature type="region of interest" description="G3" evidence="1">
    <location>
        <begin position="81"/>
        <end position="84"/>
    </location>
</feature>
<feature type="region of interest" description="G4" evidence="1">
    <location>
        <begin position="136"/>
        <end position="139"/>
    </location>
</feature>
<feature type="region of interest" description="G5" evidence="1">
    <location>
        <begin position="174"/>
        <end position="176"/>
    </location>
</feature>
<feature type="binding site" evidence="2">
    <location>
        <begin position="19"/>
        <end position="26"/>
    </location>
    <ligand>
        <name>GTP</name>
        <dbReference type="ChEBI" id="CHEBI:37565"/>
    </ligand>
</feature>
<feature type="binding site" evidence="2">
    <location>
        <position position="26"/>
    </location>
    <ligand>
        <name>Mg(2+)</name>
        <dbReference type="ChEBI" id="CHEBI:18420"/>
    </ligand>
</feature>
<feature type="binding site" evidence="2">
    <location>
        <begin position="81"/>
        <end position="85"/>
    </location>
    <ligand>
        <name>GTP</name>
        <dbReference type="ChEBI" id="CHEBI:37565"/>
    </ligand>
</feature>
<feature type="binding site" evidence="2">
    <location>
        <begin position="136"/>
        <end position="139"/>
    </location>
    <ligand>
        <name>GTP</name>
        <dbReference type="ChEBI" id="CHEBI:37565"/>
    </ligand>
</feature>